<sequence length="1664" mass="181889">MESTDSSDSSGDSLKSIPRPDFEALSAIGSPQPQLQSSSLDGHVEMEPVIMPSKRQKYIVSAPPGSANCSSNSSSSSPSNINVGSSLTMKLTKVQPQQHQAKSSTPNNKGKVAKEMVALQRSHIESEVLSNFVTGVSKLKSRKSRYVPGNLATQAVGGELSRSLNTSSENENKSLKVALKRSSSIPAPILDSDDDWQDEDIAWGVTTCRPRGRSMAFEDGERLANLNAEDRNIVPAYSMATRCRSRSKTLSLSNSWSNDDKGPRRSNLRSENEEFAKKHNAFLDRIIHDDRESELALNTSGEGESSLFSDASDTKTTTAKTPEEEAAERLALIYEEPPTPGWDPFCWKCRGCGKLMPCSKCLRSFHSYCVRPATTKFDSSWKCPECQVIEAAPKRLRRNGVSVDLLSQLLSFALDRMKHVRGAHKLRSPLEVFPLTYKKFFVNPVSFESLAQCIRNGAYQSTDEFLSEVKWIQHNALILDAGDAKVEQASKAVVKVCRQEANEIDTCPECYLNANSSDEWFVKVCRHPHLLLWAKLKGFPYWPAKAMGSSNSTLVNVRFFGKHDRAFVPVKDCFLYSAQNPNTQTSRRSARDLAECIREVEIHIDHIKRKIGAFNYAPYRTPYDPLEEQQQLEQMMPGVYAAIDRELEPANKTPLQFLIRKTADDKLSIVKKTKATESGNESDQSPSPTKKLSEVDVVSVTGSGCSDHSNVKSNNYEVISRSGESLTDSRCKVLLKRKSLAAKIVAESVETSEAVAPKRKHSLSDASFTSESSEHKRKSKHARKQHDNQDNQIEEAEKTGQEPPKSPTISKQNENLRDEENVIENAANDTSSASPVSASVVSVVELVRRRQGVTITKIPREQQQTAEDTAAVPIPLPTAPPPKQNIPKGNEAANPKQSDVERQQEQLIKKVIPFIEIKTEVMSEPDDEGIEEASPANQPQTDQVPLQQETITAQPESQMPAAAPAPQPKPVDNAPFEEVRIKEEILSEDEMETEQSIVSRRLKSVPPMPLPMPPPPPLPPREESPATADSVRFVGDTTIQRVSQKQGGKSTDTGGKRKGVQQVPIAGIPQAPSPTHSPLLSTAPSPSASPKPTSTLAVSKPPPPPPPKGKSASHLQFRGKNDRIPTSPPATAPPATNTSSLLRSNMVVIPVEQGGSCNAHSPMTIPVPPLRAVSKNTLQNTSTGSTSSCVPSSVSMPPPLAGLSIPPVATPTSQEESITNSGQPVGLLASALNGTANDVLSSDSIPNDPITPGLATALSEMLLHTGVPKLIARPRGALRSDGSQIYPSQAGPVSQKLKENAHKITDYFISVIEDTLSDMATGDQSVLQARIAGLSLENERLKQHYDRQINDLHRTSELMISEMRKTLEQEHKRVISELRQQNAIELMRAVEEAKRKQWCANCMREAQLYCCWNTSYCDYPCQQLHWPGHSATCGQSVPPTIPVPPSVPTPIIEPGRAKAKVATPTATPSITNPSPSSQIMRTVAACPSAPPSANASSSKKWPPMMTLMNQSNQEAMLKLPATTYLRPVVSTTMTAPVTAPQPANNNSTNVIMAPTPPPGNNLATIISAQRNPPNYNAKHPNPAMPVQRFNIPLPITVNSNAPFMMAEQHQKQVPKATGRSGKNNSRMRQTYSNNINNSNPQGMRCNNNPQAIRQNQMNQQVFQP</sequence>
<feature type="chain" id="PRO_0000457660" description="MYND-type zinc finger-containing chromatin reader Zmynd8">
    <location>
        <begin position="1"/>
        <end position="1664"/>
    </location>
</feature>
<feature type="domain" description="Bromo" evidence="2">
    <location>
        <begin position="401"/>
        <end position="504"/>
    </location>
</feature>
<feature type="domain" description="PWWP" evidence="5">
    <location>
        <begin position="528"/>
        <end position="579"/>
    </location>
</feature>
<feature type="zinc finger region" description="PHD-type" evidence="4">
    <location>
        <begin position="343"/>
        <end position="389"/>
    </location>
</feature>
<feature type="zinc finger region" description="MYND-type" evidence="3">
    <location>
        <begin position="1399"/>
        <end position="1433"/>
    </location>
</feature>
<feature type="region of interest" description="Disordered" evidence="6">
    <location>
        <begin position="1"/>
        <end position="84"/>
    </location>
</feature>
<feature type="region of interest" description="Disordered" evidence="6">
    <location>
        <begin position="251"/>
        <end position="271"/>
    </location>
</feature>
<feature type="region of interest" description="Disordered" evidence="6">
    <location>
        <begin position="295"/>
        <end position="323"/>
    </location>
</feature>
<feature type="region of interest" description="Disordered" evidence="6">
    <location>
        <begin position="672"/>
        <end position="693"/>
    </location>
</feature>
<feature type="region of interest" description="Disordered" evidence="6">
    <location>
        <begin position="747"/>
        <end position="815"/>
    </location>
</feature>
<feature type="region of interest" description="Disordered" evidence="6">
    <location>
        <begin position="857"/>
        <end position="905"/>
    </location>
</feature>
<feature type="region of interest" description="Disordered" evidence="6">
    <location>
        <begin position="919"/>
        <end position="1139"/>
    </location>
</feature>
<feature type="region of interest" description="Disordered" evidence="6">
    <location>
        <begin position="1613"/>
        <end position="1648"/>
    </location>
</feature>
<feature type="compositionally biased region" description="Low complexity" evidence="6">
    <location>
        <begin position="1"/>
        <end position="16"/>
    </location>
</feature>
<feature type="compositionally biased region" description="Low complexity" evidence="6">
    <location>
        <begin position="30"/>
        <end position="40"/>
    </location>
</feature>
<feature type="compositionally biased region" description="Low complexity" evidence="6">
    <location>
        <begin position="61"/>
        <end position="84"/>
    </location>
</feature>
<feature type="compositionally biased region" description="Basic and acidic residues" evidence="6">
    <location>
        <begin position="258"/>
        <end position="271"/>
    </location>
</feature>
<feature type="compositionally biased region" description="Polar residues" evidence="6">
    <location>
        <begin position="296"/>
        <end position="308"/>
    </location>
</feature>
<feature type="compositionally biased region" description="Low complexity" evidence="6">
    <location>
        <begin position="309"/>
        <end position="320"/>
    </location>
</feature>
<feature type="compositionally biased region" description="Polar residues" evidence="6">
    <location>
        <begin position="676"/>
        <end position="690"/>
    </location>
</feature>
<feature type="compositionally biased region" description="Basic residues" evidence="6">
    <location>
        <begin position="775"/>
        <end position="784"/>
    </location>
</feature>
<feature type="compositionally biased region" description="Basic and acidic residues" evidence="6">
    <location>
        <begin position="785"/>
        <end position="800"/>
    </location>
</feature>
<feature type="compositionally biased region" description="Pro residues" evidence="6">
    <location>
        <begin position="874"/>
        <end position="884"/>
    </location>
</feature>
<feature type="compositionally biased region" description="Polar residues" evidence="6">
    <location>
        <begin position="935"/>
        <end position="952"/>
    </location>
</feature>
<feature type="compositionally biased region" description="Low complexity" evidence="6">
    <location>
        <begin position="953"/>
        <end position="962"/>
    </location>
</feature>
<feature type="compositionally biased region" description="Pro residues" evidence="6">
    <location>
        <begin position="1006"/>
        <end position="1019"/>
    </location>
</feature>
<feature type="compositionally biased region" description="Polar residues" evidence="6">
    <location>
        <begin position="1037"/>
        <end position="1053"/>
    </location>
</feature>
<feature type="compositionally biased region" description="Low complexity" evidence="6">
    <location>
        <begin position="1073"/>
        <end position="1097"/>
    </location>
</feature>
<feature type="compositionally biased region" description="Polar residues" evidence="6">
    <location>
        <begin position="1620"/>
        <end position="1648"/>
    </location>
</feature>
<feature type="binding site" evidence="4">
    <location>
        <position position="346"/>
    </location>
    <ligand>
        <name>Zn(2+)</name>
        <dbReference type="ChEBI" id="CHEBI:29105"/>
        <label>1</label>
    </ligand>
</feature>
<feature type="binding site" evidence="4">
    <location>
        <position position="349"/>
    </location>
    <ligand>
        <name>Zn(2+)</name>
        <dbReference type="ChEBI" id="CHEBI:29105"/>
        <label>1</label>
    </ligand>
</feature>
<feature type="binding site" evidence="4">
    <location>
        <position position="358"/>
    </location>
    <ligand>
        <name>Zn(2+)</name>
        <dbReference type="ChEBI" id="CHEBI:29105"/>
        <label>2</label>
    </ligand>
</feature>
<feature type="binding site" evidence="4">
    <location>
        <position position="361"/>
    </location>
    <ligand>
        <name>Zn(2+)</name>
        <dbReference type="ChEBI" id="CHEBI:29105"/>
        <label>2</label>
    </ligand>
</feature>
<feature type="binding site" evidence="4">
    <location>
        <position position="366"/>
    </location>
    <ligand>
        <name>Zn(2+)</name>
        <dbReference type="ChEBI" id="CHEBI:29105"/>
        <label>1</label>
    </ligand>
</feature>
<feature type="binding site" evidence="4">
    <location>
        <position position="369"/>
    </location>
    <ligand>
        <name>Zn(2+)</name>
        <dbReference type="ChEBI" id="CHEBI:29105"/>
        <label>1</label>
    </ligand>
</feature>
<feature type="binding site" evidence="4">
    <location>
        <position position="383"/>
    </location>
    <ligand>
        <name>Zn(2+)</name>
        <dbReference type="ChEBI" id="CHEBI:29105"/>
        <label>2</label>
    </ligand>
</feature>
<feature type="binding site" evidence="4">
    <location>
        <position position="386"/>
    </location>
    <ligand>
        <name>Zn(2+)</name>
        <dbReference type="ChEBI" id="CHEBI:29105"/>
        <label>2</label>
    </ligand>
</feature>
<feature type="binding site" evidence="1">
    <location>
        <position position="507"/>
    </location>
    <ligand>
        <name>Zn(2+)</name>
        <dbReference type="ChEBI" id="CHEBI:29105"/>
        <label>3</label>
    </ligand>
</feature>
<feature type="binding site" evidence="1">
    <location>
        <position position="510"/>
    </location>
    <ligand>
        <name>Zn(2+)</name>
        <dbReference type="ChEBI" id="CHEBI:29105"/>
        <label>3</label>
    </ligand>
</feature>
<feature type="binding site" evidence="1">
    <location>
        <position position="525"/>
    </location>
    <ligand>
        <name>Zn(2+)</name>
        <dbReference type="ChEBI" id="CHEBI:29105"/>
        <label>3</label>
    </ligand>
</feature>
<feature type="binding site" evidence="3">
    <location>
        <position position="1399"/>
    </location>
    <ligand>
        <name>Zn(2+)</name>
        <dbReference type="ChEBI" id="CHEBI:29105"/>
        <label>3</label>
    </ligand>
</feature>
<feature type="binding site" evidence="3">
    <location>
        <position position="1402"/>
    </location>
    <ligand>
        <name>Zn(2+)</name>
        <dbReference type="ChEBI" id="CHEBI:29105"/>
        <label>3</label>
    </ligand>
</feature>
<feature type="binding site" evidence="3">
    <location>
        <position position="1410"/>
    </location>
    <ligand>
        <name>Zn(2+)</name>
        <dbReference type="ChEBI" id="CHEBI:29105"/>
        <label>4</label>
    </ligand>
</feature>
<feature type="binding site" evidence="3">
    <location>
        <position position="1411"/>
    </location>
    <ligand>
        <name>Zn(2+)</name>
        <dbReference type="ChEBI" id="CHEBI:29105"/>
        <label>4</label>
    </ligand>
</feature>
<feature type="binding site" evidence="3">
    <location>
        <position position="1417"/>
    </location>
    <ligand>
        <name>Zn(2+)</name>
        <dbReference type="ChEBI" id="CHEBI:29105"/>
        <label>3</label>
    </ligand>
</feature>
<feature type="binding site" evidence="3">
    <location>
        <position position="1421"/>
    </location>
    <ligand>
        <name>Zn(2+)</name>
        <dbReference type="ChEBI" id="CHEBI:29105"/>
        <label>3</label>
    </ligand>
</feature>
<feature type="binding site" evidence="3">
    <location>
        <position position="1429"/>
    </location>
    <ligand>
        <name>Zn(2+)</name>
        <dbReference type="ChEBI" id="CHEBI:29105"/>
        <label>4</label>
    </ligand>
</feature>
<feature type="binding site" evidence="3">
    <location>
        <position position="1433"/>
    </location>
    <ligand>
        <name>Zn(2+)</name>
        <dbReference type="ChEBI" id="CHEBI:29105"/>
        <label>4</label>
    </ligand>
</feature>
<feature type="splice variant" id="VSP_061804" description="In isoform B.">
    <original>SQKQGGKSTDTGGKRKGVQQVPIAGIPQAPSPTHSPLLSTAPSPSASPKPTSTLAVSKPPPPPPPKGKSASHLQFRGKN</original>
    <variation>YPRHPLQLTRPFCQPHLHLRHHQSQLARLLLASHRLRHRPRESLRHTFNFEEKTIVSQPPHRRLLHQPQTRLLCSDPTW</variation>
    <location>
        <begin position="1043"/>
        <end position="1121"/>
    </location>
</feature>
<feature type="splice variant" id="VSP_061805" description="In isoform B.">
    <location>
        <begin position="1122"/>
        <end position="1664"/>
    </location>
</feature>
<protein>
    <recommendedName>
        <fullName evidence="1">MYND-type zinc finger-containing chromatin reader Zmynd8</fullName>
    </recommendedName>
</protein>
<keyword id="KW-0025">Alternative splicing</keyword>
<keyword id="KW-0103">Bromodomain</keyword>
<keyword id="KW-0156">Chromatin regulator</keyword>
<keyword id="KW-0158">Chromosome</keyword>
<keyword id="KW-0479">Metal-binding</keyword>
<keyword id="KW-0524">Neurogenesis</keyword>
<keyword id="KW-0539">Nucleus</keyword>
<keyword id="KW-1185">Reference proteome</keyword>
<keyword id="KW-0804">Transcription</keyword>
<keyword id="KW-0805">Transcription regulation</keyword>
<keyword id="KW-0862">Zinc</keyword>
<keyword id="KW-0863">Zinc-finger</keyword>
<comment type="function">
    <text evidence="1 7">Chromatin reader that recognizes specific histone signatures to regulate transcription (By similarity). Plays a role in neuronal development (PubMed:35916866).</text>
</comment>
<comment type="subcellular location">
    <subcellularLocation>
        <location evidence="1">Nucleus</location>
    </subcellularLocation>
    <subcellularLocation>
        <location evidence="1">Chromosome</location>
    </subcellularLocation>
</comment>
<comment type="alternative products">
    <event type="alternative splicing"/>
    <isoform>
        <id>Q7KRS9-1</id>
        <name evidence="11">C</name>
        <sequence type="displayed"/>
    </isoform>
    <isoform>
        <id>Q7KRS9-2</id>
        <name evidence="11">B</name>
        <sequence type="described" ref="VSP_061804 VSP_061805"/>
    </isoform>
</comment>
<comment type="disruption phenotype">
    <text evidence="7">RNAi-mediated knockdown impairs habituation learning.</text>
</comment>
<proteinExistence type="evidence at transcript level"/>
<name>ZMYD8_DROME</name>
<reference evidence="12" key="1">
    <citation type="journal article" date="2000" name="Science">
        <title>The genome sequence of Drosophila melanogaster.</title>
        <authorList>
            <person name="Adams M.D."/>
            <person name="Celniker S.E."/>
            <person name="Holt R.A."/>
            <person name="Evans C.A."/>
            <person name="Gocayne J.D."/>
            <person name="Amanatides P.G."/>
            <person name="Scherer S.E."/>
            <person name="Li P.W."/>
            <person name="Hoskins R.A."/>
            <person name="Galle R.F."/>
            <person name="George R.A."/>
            <person name="Lewis S.E."/>
            <person name="Richards S."/>
            <person name="Ashburner M."/>
            <person name="Henderson S.N."/>
            <person name="Sutton G.G."/>
            <person name="Wortman J.R."/>
            <person name="Yandell M.D."/>
            <person name="Zhang Q."/>
            <person name="Chen L.X."/>
            <person name="Brandon R.C."/>
            <person name="Rogers Y.-H.C."/>
            <person name="Blazej R.G."/>
            <person name="Champe M."/>
            <person name="Pfeiffer B.D."/>
            <person name="Wan K.H."/>
            <person name="Doyle C."/>
            <person name="Baxter E.G."/>
            <person name="Helt G."/>
            <person name="Nelson C.R."/>
            <person name="Miklos G.L.G."/>
            <person name="Abril J.F."/>
            <person name="Agbayani A."/>
            <person name="An H.-J."/>
            <person name="Andrews-Pfannkoch C."/>
            <person name="Baldwin D."/>
            <person name="Ballew R.M."/>
            <person name="Basu A."/>
            <person name="Baxendale J."/>
            <person name="Bayraktaroglu L."/>
            <person name="Beasley E.M."/>
            <person name="Beeson K.Y."/>
            <person name="Benos P.V."/>
            <person name="Berman B.P."/>
            <person name="Bhandari D."/>
            <person name="Bolshakov S."/>
            <person name="Borkova D."/>
            <person name="Botchan M.R."/>
            <person name="Bouck J."/>
            <person name="Brokstein P."/>
            <person name="Brottier P."/>
            <person name="Burtis K.C."/>
            <person name="Busam D.A."/>
            <person name="Butler H."/>
            <person name="Cadieu E."/>
            <person name="Center A."/>
            <person name="Chandra I."/>
            <person name="Cherry J.M."/>
            <person name="Cawley S."/>
            <person name="Dahlke C."/>
            <person name="Davenport L.B."/>
            <person name="Davies P."/>
            <person name="de Pablos B."/>
            <person name="Delcher A."/>
            <person name="Deng Z."/>
            <person name="Mays A.D."/>
            <person name="Dew I."/>
            <person name="Dietz S.M."/>
            <person name="Dodson K."/>
            <person name="Doup L.E."/>
            <person name="Downes M."/>
            <person name="Dugan-Rocha S."/>
            <person name="Dunkov B.C."/>
            <person name="Dunn P."/>
            <person name="Durbin K.J."/>
            <person name="Evangelista C.C."/>
            <person name="Ferraz C."/>
            <person name="Ferriera S."/>
            <person name="Fleischmann W."/>
            <person name="Fosler C."/>
            <person name="Gabrielian A.E."/>
            <person name="Garg N.S."/>
            <person name="Gelbart W.M."/>
            <person name="Glasser K."/>
            <person name="Glodek A."/>
            <person name="Gong F."/>
            <person name="Gorrell J.H."/>
            <person name="Gu Z."/>
            <person name="Guan P."/>
            <person name="Harris M."/>
            <person name="Harris N.L."/>
            <person name="Harvey D.A."/>
            <person name="Heiman T.J."/>
            <person name="Hernandez J.R."/>
            <person name="Houck J."/>
            <person name="Hostin D."/>
            <person name="Houston K.A."/>
            <person name="Howland T.J."/>
            <person name="Wei M.-H."/>
            <person name="Ibegwam C."/>
            <person name="Jalali M."/>
            <person name="Kalush F."/>
            <person name="Karpen G.H."/>
            <person name="Ke Z."/>
            <person name="Kennison J.A."/>
            <person name="Ketchum K.A."/>
            <person name="Kimmel B.E."/>
            <person name="Kodira C.D."/>
            <person name="Kraft C.L."/>
            <person name="Kravitz S."/>
            <person name="Kulp D."/>
            <person name="Lai Z."/>
            <person name="Lasko P."/>
            <person name="Lei Y."/>
            <person name="Levitsky A.A."/>
            <person name="Li J.H."/>
            <person name="Li Z."/>
            <person name="Liang Y."/>
            <person name="Lin X."/>
            <person name="Liu X."/>
            <person name="Mattei B."/>
            <person name="McIntosh T.C."/>
            <person name="McLeod M.P."/>
            <person name="McPherson D."/>
            <person name="Merkulov G."/>
            <person name="Milshina N.V."/>
            <person name="Mobarry C."/>
            <person name="Morris J."/>
            <person name="Moshrefi A."/>
            <person name="Mount S.M."/>
            <person name="Moy M."/>
            <person name="Murphy B."/>
            <person name="Murphy L."/>
            <person name="Muzny D.M."/>
            <person name="Nelson D.L."/>
            <person name="Nelson D.R."/>
            <person name="Nelson K.A."/>
            <person name="Nixon K."/>
            <person name="Nusskern D.R."/>
            <person name="Pacleb J.M."/>
            <person name="Palazzolo M."/>
            <person name="Pittman G.S."/>
            <person name="Pan S."/>
            <person name="Pollard J."/>
            <person name="Puri V."/>
            <person name="Reese M.G."/>
            <person name="Reinert K."/>
            <person name="Remington K."/>
            <person name="Saunders R.D.C."/>
            <person name="Scheeler F."/>
            <person name="Shen H."/>
            <person name="Shue B.C."/>
            <person name="Siden-Kiamos I."/>
            <person name="Simpson M."/>
            <person name="Skupski M.P."/>
            <person name="Smith T.J."/>
            <person name="Spier E."/>
            <person name="Spradling A.C."/>
            <person name="Stapleton M."/>
            <person name="Strong R."/>
            <person name="Sun E."/>
            <person name="Svirskas R."/>
            <person name="Tector C."/>
            <person name="Turner R."/>
            <person name="Venter E."/>
            <person name="Wang A.H."/>
            <person name="Wang X."/>
            <person name="Wang Z.-Y."/>
            <person name="Wassarman D.A."/>
            <person name="Weinstock G.M."/>
            <person name="Weissenbach J."/>
            <person name="Williams S.M."/>
            <person name="Woodage T."/>
            <person name="Worley K.C."/>
            <person name="Wu D."/>
            <person name="Yang S."/>
            <person name="Yao Q.A."/>
            <person name="Ye J."/>
            <person name="Yeh R.-F."/>
            <person name="Zaveri J.S."/>
            <person name="Zhan M."/>
            <person name="Zhang G."/>
            <person name="Zhao Q."/>
            <person name="Zheng L."/>
            <person name="Zheng X.H."/>
            <person name="Zhong F.N."/>
            <person name="Zhong W."/>
            <person name="Zhou X."/>
            <person name="Zhu S.C."/>
            <person name="Zhu X."/>
            <person name="Smith H.O."/>
            <person name="Gibbs R.A."/>
            <person name="Myers E.W."/>
            <person name="Rubin G.M."/>
            <person name="Venter J.C."/>
        </authorList>
    </citation>
    <scope>NUCLEOTIDE SEQUENCE [LARGE SCALE GENOMIC DNA]</scope>
    <source>
        <strain evidence="12">Berkeley</strain>
    </source>
</reference>
<reference evidence="12" key="2">
    <citation type="journal article" date="2002" name="Genome Biol.">
        <title>Annotation of the Drosophila melanogaster euchromatic genome: a systematic review.</title>
        <authorList>
            <person name="Misra S."/>
            <person name="Crosby M.A."/>
            <person name="Mungall C.J."/>
            <person name="Matthews B.B."/>
            <person name="Campbell K.S."/>
            <person name="Hradecky P."/>
            <person name="Huang Y."/>
            <person name="Kaminker J.S."/>
            <person name="Millburn G.H."/>
            <person name="Prochnik S.E."/>
            <person name="Smith C.D."/>
            <person name="Tupy J.L."/>
            <person name="Whitfield E.J."/>
            <person name="Bayraktaroglu L."/>
            <person name="Berman B.P."/>
            <person name="Bettencourt B.R."/>
            <person name="Celniker S.E."/>
            <person name="de Grey A.D.N.J."/>
            <person name="Drysdale R.A."/>
            <person name="Harris N.L."/>
            <person name="Richter J."/>
            <person name="Russo S."/>
            <person name="Schroeder A.J."/>
            <person name="Shu S.Q."/>
            <person name="Stapleton M."/>
            <person name="Yamada C."/>
            <person name="Ashburner M."/>
            <person name="Gelbart W.M."/>
            <person name="Rubin G.M."/>
            <person name="Lewis S.E."/>
        </authorList>
    </citation>
    <scope>GENOME REANNOTATION</scope>
    <source>
        <strain evidence="12">Berkeley</strain>
    </source>
</reference>
<reference evidence="10" key="3">
    <citation type="submission" date="2003-08" db="EMBL/GenBank/DDBJ databases">
        <authorList>
            <person name="Stapleton M."/>
            <person name="Brokstein P."/>
            <person name="Hong L."/>
            <person name="Agbayani A."/>
            <person name="Carlson J."/>
            <person name="Champe M."/>
            <person name="Chavez C."/>
            <person name="Dorsett V."/>
            <person name="Dresnek D."/>
            <person name="Farfan D."/>
            <person name="Frise E."/>
            <person name="George R."/>
            <person name="Gonzalez M."/>
            <person name="Guarin H."/>
            <person name="Kronmiller B."/>
            <person name="Li P."/>
            <person name="Liao G."/>
            <person name="Miranda A."/>
            <person name="Mungall C.J."/>
            <person name="Nunoo J."/>
            <person name="Pacleb J."/>
            <person name="Paragas V."/>
            <person name="Park S."/>
            <person name="Patel S."/>
            <person name="Phouanenavong S."/>
            <person name="Wan K."/>
            <person name="Yu C."/>
            <person name="Lewis S.E."/>
            <person name="Rubin G.M."/>
            <person name="Celniker S."/>
        </authorList>
    </citation>
    <scope>NUCLEOTIDE SEQUENCE [LARGE SCALE MRNA] (ISOFORM C)</scope>
    <source>
        <strain evidence="10">Berkeley</strain>
    </source>
</reference>
<reference evidence="9" key="4">
    <citation type="journal article" date="2022" name="Genet. Med.">
        <title>De Novo ZMYND8 variants result in an autosomal dominant neurodevelopmental disorder with cardiac malformations.</title>
        <authorList>
            <person name="Dias K.R."/>
            <person name="Carlston C.M."/>
            <person name="Blok L.E.R."/>
            <person name="De Hayr L."/>
            <person name="Nawaz U."/>
            <person name="Evans C.A."/>
            <person name="Bayrak-Toydemir P."/>
            <person name="Htun S."/>
            <person name="Zhu Y."/>
            <person name="Ma A."/>
            <person name="Lynch S.A."/>
            <person name="Moorwood C."/>
            <person name="Stals K."/>
            <person name="Ellard S."/>
            <person name="Bainbridge M.N."/>
            <person name="Friedman J."/>
            <person name="Pappas J.G."/>
            <person name="Rabin R."/>
            <person name="Nowak C.B."/>
            <person name="Douglas J."/>
            <person name="Wilson T.E."/>
            <person name="Guillen Sacoto M.J."/>
            <person name="Mullegama S.V."/>
            <person name="Palculict T.B."/>
            <person name="Kirk E.P."/>
            <person name="Pinner J.R."/>
            <person name="Edwards M."/>
            <person name="Montanari F."/>
            <person name="Graziano C."/>
            <person name="Pippucci T."/>
            <person name="Dingmann B."/>
            <person name="Glass I."/>
            <person name="Mefford H.C."/>
            <person name="Shimoji T."/>
            <person name="Suzuki T."/>
            <person name="Yamakawa K."/>
            <person name="Streff H."/>
            <person name="Schaaf C.P."/>
            <person name="Slavotinek A.M."/>
            <person name="Voineagu I."/>
            <person name="Carey J.C."/>
            <person name="Buckley M.F."/>
            <person name="Schenck A."/>
            <person name="Harvey R.J."/>
            <person name="Roscioli T."/>
        </authorList>
    </citation>
    <scope>FUNCTION</scope>
    <scope>DISRUPTION PHENOTYPE</scope>
</reference>
<evidence type="ECO:0000250" key="1">
    <source>
        <dbReference type="UniProtKB" id="Q9ULU4"/>
    </source>
</evidence>
<evidence type="ECO:0000255" key="2">
    <source>
        <dbReference type="PROSITE-ProRule" id="PRU00035"/>
    </source>
</evidence>
<evidence type="ECO:0000255" key="3">
    <source>
        <dbReference type="PROSITE-ProRule" id="PRU00134"/>
    </source>
</evidence>
<evidence type="ECO:0000255" key="4">
    <source>
        <dbReference type="PROSITE-ProRule" id="PRU00146"/>
    </source>
</evidence>
<evidence type="ECO:0000255" key="5">
    <source>
        <dbReference type="PROSITE-ProRule" id="PRU00162"/>
    </source>
</evidence>
<evidence type="ECO:0000256" key="6">
    <source>
        <dbReference type="SAM" id="MobiDB-lite"/>
    </source>
</evidence>
<evidence type="ECO:0000269" key="7">
    <source>
    </source>
</evidence>
<evidence type="ECO:0000303" key="8">
    <source>
    </source>
</evidence>
<evidence type="ECO:0000305" key="9"/>
<evidence type="ECO:0000312" key="10">
    <source>
        <dbReference type="EMBL" id="AAQ22584.1"/>
    </source>
</evidence>
<evidence type="ECO:0000312" key="11">
    <source>
        <dbReference type="FlyBase" id="FBgn0039863"/>
    </source>
</evidence>
<evidence type="ECO:0000312" key="12">
    <source>
        <dbReference type="Proteomes" id="UP000000803"/>
    </source>
</evidence>
<gene>
    <name evidence="8" type="primary">Zmynd8</name>
    <name evidence="11" type="ORF">CG1815</name>
</gene>
<dbReference type="EMBL" id="AE014297">
    <property type="protein sequence ID" value="AAN14280.1"/>
    <property type="molecule type" value="Genomic_DNA"/>
</dbReference>
<dbReference type="EMBL" id="AE014297">
    <property type="protein sequence ID" value="AAN14281.1"/>
    <property type="molecule type" value="Genomic_DNA"/>
</dbReference>
<dbReference type="EMBL" id="BT010115">
    <property type="protein sequence ID" value="AAQ22584.1"/>
    <property type="molecule type" value="mRNA"/>
</dbReference>
<dbReference type="RefSeq" id="NP_651881.2">
    <molecule id="Q7KRS9-1"/>
    <property type="nucleotide sequence ID" value="NM_143624.3"/>
</dbReference>
<dbReference type="RefSeq" id="NP_733442.1">
    <molecule id="Q7KRS9-2"/>
    <property type="nucleotide sequence ID" value="NM_170563.2"/>
</dbReference>
<dbReference type="SMR" id="Q7KRS9"/>
<dbReference type="FunCoup" id="Q7KRS9">
    <property type="interactions" value="2718"/>
</dbReference>
<dbReference type="STRING" id="7227.FBpp0085185"/>
<dbReference type="GlyGen" id="Q7KRS9">
    <property type="glycosylation" value="3 sites"/>
</dbReference>
<dbReference type="PaxDb" id="7227-FBpp0085185"/>
<dbReference type="DNASU" id="43730"/>
<dbReference type="EnsemblMetazoa" id="FBtr0085823">
    <molecule id="Q7KRS9-2"/>
    <property type="protein sequence ID" value="FBpp0085184"/>
    <property type="gene ID" value="FBgn0039863"/>
</dbReference>
<dbReference type="EnsemblMetazoa" id="FBtr0085824">
    <molecule id="Q7KRS9-1"/>
    <property type="protein sequence ID" value="FBpp0085185"/>
    <property type="gene ID" value="FBgn0039863"/>
</dbReference>
<dbReference type="GeneID" id="43730"/>
<dbReference type="KEGG" id="dme:Dmel_CG1815"/>
<dbReference type="UCSC" id="CG1815-RB">
    <property type="organism name" value="d. melanogaster"/>
</dbReference>
<dbReference type="UCSC" id="CG1815-RC">
    <molecule id="Q7KRS9-1"/>
    <property type="organism name" value="d. melanogaster"/>
</dbReference>
<dbReference type="AGR" id="FB:FBgn0039863"/>
<dbReference type="CTD" id="23613"/>
<dbReference type="FlyBase" id="FBgn0039863">
    <property type="gene designation" value="Zmynd8"/>
</dbReference>
<dbReference type="VEuPathDB" id="VectorBase:FBgn0039863"/>
<dbReference type="eggNOG" id="KOG3612">
    <property type="taxonomic scope" value="Eukaryota"/>
</dbReference>
<dbReference type="GeneTree" id="ENSGT00940000154897"/>
<dbReference type="HOGENOM" id="CLU_002625_0_0_1"/>
<dbReference type="InParanoid" id="Q7KRS9"/>
<dbReference type="OMA" id="MPVQRFN"/>
<dbReference type="OrthoDB" id="298344at2759"/>
<dbReference type="BioGRID-ORCS" id="43730">
    <property type="hits" value="0 hits in 1 CRISPR screen"/>
</dbReference>
<dbReference type="GenomeRNAi" id="43730"/>
<dbReference type="PRO" id="PR:Q7KRS9"/>
<dbReference type="Proteomes" id="UP000000803">
    <property type="component" value="Chromosome 3R"/>
</dbReference>
<dbReference type="Bgee" id="FBgn0039863">
    <property type="expression patterns" value="Expressed in wing disc and 150 other cell types or tissues"/>
</dbReference>
<dbReference type="ExpressionAtlas" id="Q7KRS9">
    <property type="expression patterns" value="baseline and differential"/>
</dbReference>
<dbReference type="GO" id="GO:0005694">
    <property type="term" value="C:chromosome"/>
    <property type="evidence" value="ECO:0007669"/>
    <property type="project" value="UniProtKB-SubCell"/>
</dbReference>
<dbReference type="GO" id="GO:0005737">
    <property type="term" value="C:cytoplasm"/>
    <property type="evidence" value="ECO:0000318"/>
    <property type="project" value="GO_Central"/>
</dbReference>
<dbReference type="GO" id="GO:0005634">
    <property type="term" value="C:nucleus"/>
    <property type="evidence" value="ECO:0000318"/>
    <property type="project" value="GO_Central"/>
</dbReference>
<dbReference type="GO" id="GO:0140015">
    <property type="term" value="F:histone H3K14ac reader activity"/>
    <property type="evidence" value="ECO:0000250"/>
    <property type="project" value="FlyBase"/>
</dbReference>
<dbReference type="GO" id="GO:0035064">
    <property type="term" value="F:methylated histone binding"/>
    <property type="evidence" value="ECO:0000250"/>
    <property type="project" value="FlyBase"/>
</dbReference>
<dbReference type="GO" id="GO:0003714">
    <property type="term" value="F:transcription corepressor activity"/>
    <property type="evidence" value="ECO:0000318"/>
    <property type="project" value="GO_Central"/>
</dbReference>
<dbReference type="GO" id="GO:0008270">
    <property type="term" value="F:zinc ion binding"/>
    <property type="evidence" value="ECO:0007669"/>
    <property type="project" value="UniProtKB-KW"/>
</dbReference>
<dbReference type="GO" id="GO:0007399">
    <property type="term" value="P:nervous system development"/>
    <property type="evidence" value="ECO:0007669"/>
    <property type="project" value="UniProtKB-KW"/>
</dbReference>
<dbReference type="CDD" id="cd05508">
    <property type="entry name" value="Bromo_RACK7"/>
    <property type="match status" value="1"/>
</dbReference>
<dbReference type="CDD" id="cd15538">
    <property type="entry name" value="PHD_PRKCBP1"/>
    <property type="match status" value="1"/>
</dbReference>
<dbReference type="CDD" id="cd20160">
    <property type="entry name" value="PWWP_PRKCBP1"/>
    <property type="match status" value="1"/>
</dbReference>
<dbReference type="FunFam" id="6.10.140.2220:FF:000002">
    <property type="entry name" value="Protein kinase C-binding protein 1 isoform C"/>
    <property type="match status" value="1"/>
</dbReference>
<dbReference type="Gene3D" id="2.30.30.140">
    <property type="match status" value="1"/>
</dbReference>
<dbReference type="Gene3D" id="6.10.140.2220">
    <property type="match status" value="1"/>
</dbReference>
<dbReference type="Gene3D" id="1.20.920.10">
    <property type="entry name" value="Bromodomain-like"/>
    <property type="match status" value="1"/>
</dbReference>
<dbReference type="Gene3D" id="3.30.40.10">
    <property type="entry name" value="Zinc/RING finger domain, C3HC4 (zinc finger)"/>
    <property type="match status" value="1"/>
</dbReference>
<dbReference type="InterPro" id="IPR001487">
    <property type="entry name" value="Bromodomain"/>
</dbReference>
<dbReference type="InterPro" id="IPR036427">
    <property type="entry name" value="Bromodomain-like_sf"/>
</dbReference>
<dbReference type="InterPro" id="IPR057053">
    <property type="entry name" value="MYND_ZMYND11_ZMYD8"/>
</dbReference>
<dbReference type="InterPro" id="IPR044075">
    <property type="entry name" value="PRKCBP1_PHD"/>
</dbReference>
<dbReference type="InterPro" id="IPR000313">
    <property type="entry name" value="PWWP_dom"/>
</dbReference>
<dbReference type="InterPro" id="IPR019786">
    <property type="entry name" value="Zinc_finger_PHD-type_CS"/>
</dbReference>
<dbReference type="InterPro" id="IPR037967">
    <property type="entry name" value="ZMYND8_Bromo_dom"/>
</dbReference>
<dbReference type="InterPro" id="IPR056987">
    <property type="entry name" value="ZMYND8_CC"/>
</dbReference>
<dbReference type="InterPro" id="IPR011011">
    <property type="entry name" value="Znf_FYVE_PHD"/>
</dbReference>
<dbReference type="InterPro" id="IPR002893">
    <property type="entry name" value="Znf_MYND"/>
</dbReference>
<dbReference type="InterPro" id="IPR001965">
    <property type="entry name" value="Znf_PHD"/>
</dbReference>
<dbReference type="InterPro" id="IPR019787">
    <property type="entry name" value="Znf_PHD-finger"/>
</dbReference>
<dbReference type="InterPro" id="IPR013083">
    <property type="entry name" value="Znf_RING/FYVE/PHD"/>
</dbReference>
<dbReference type="PANTHER" id="PTHR46453">
    <property type="entry name" value="PROTEIN KINASE C-BINDING PROTEIN 1"/>
    <property type="match status" value="1"/>
</dbReference>
<dbReference type="PANTHER" id="PTHR46453:SF5">
    <property type="entry name" value="PROTEIN KINASE C-BINDING PROTEIN 1 ISOFORM X1"/>
    <property type="match status" value="1"/>
</dbReference>
<dbReference type="Pfam" id="PF24324">
    <property type="entry name" value="MYND_ZMYND11_ZMYD8"/>
    <property type="match status" value="1"/>
</dbReference>
<dbReference type="Pfam" id="PF00855">
    <property type="entry name" value="PWWP"/>
    <property type="match status" value="1"/>
</dbReference>
<dbReference type="Pfam" id="PF23460">
    <property type="entry name" value="ZMYND8_CC"/>
    <property type="match status" value="1"/>
</dbReference>
<dbReference type="SMART" id="SM00249">
    <property type="entry name" value="PHD"/>
    <property type="match status" value="1"/>
</dbReference>
<dbReference type="SMART" id="SM00293">
    <property type="entry name" value="PWWP"/>
    <property type="match status" value="1"/>
</dbReference>
<dbReference type="SUPFAM" id="SSF47370">
    <property type="entry name" value="Bromodomain"/>
    <property type="match status" value="1"/>
</dbReference>
<dbReference type="SUPFAM" id="SSF57903">
    <property type="entry name" value="FYVE/PHD zinc finger"/>
    <property type="match status" value="1"/>
</dbReference>
<dbReference type="SUPFAM" id="SSF144232">
    <property type="entry name" value="HIT/MYND zinc finger-like"/>
    <property type="match status" value="1"/>
</dbReference>
<dbReference type="SUPFAM" id="SSF63748">
    <property type="entry name" value="Tudor/PWWP/MBT"/>
    <property type="match status" value="1"/>
</dbReference>
<dbReference type="PROSITE" id="PS50014">
    <property type="entry name" value="BROMODOMAIN_2"/>
    <property type="match status" value="1"/>
</dbReference>
<dbReference type="PROSITE" id="PS50812">
    <property type="entry name" value="PWWP"/>
    <property type="match status" value="1"/>
</dbReference>
<dbReference type="PROSITE" id="PS01360">
    <property type="entry name" value="ZF_MYND_1"/>
    <property type="match status" value="1"/>
</dbReference>
<dbReference type="PROSITE" id="PS50865">
    <property type="entry name" value="ZF_MYND_2"/>
    <property type="match status" value="1"/>
</dbReference>
<dbReference type="PROSITE" id="PS01359">
    <property type="entry name" value="ZF_PHD_1"/>
    <property type="match status" value="1"/>
</dbReference>
<dbReference type="PROSITE" id="PS50016">
    <property type="entry name" value="ZF_PHD_2"/>
    <property type="match status" value="1"/>
</dbReference>
<accession>Q7KRS9</accession>
<accession>Q8IMG3</accession>
<organism evidence="12">
    <name type="scientific">Drosophila melanogaster</name>
    <name type="common">Fruit fly</name>
    <dbReference type="NCBI Taxonomy" id="7227"/>
    <lineage>
        <taxon>Eukaryota</taxon>
        <taxon>Metazoa</taxon>
        <taxon>Ecdysozoa</taxon>
        <taxon>Arthropoda</taxon>
        <taxon>Hexapoda</taxon>
        <taxon>Insecta</taxon>
        <taxon>Pterygota</taxon>
        <taxon>Neoptera</taxon>
        <taxon>Endopterygota</taxon>
        <taxon>Diptera</taxon>
        <taxon>Brachycera</taxon>
        <taxon>Muscomorpha</taxon>
        <taxon>Ephydroidea</taxon>
        <taxon>Drosophilidae</taxon>
        <taxon>Drosophila</taxon>
        <taxon>Sophophora</taxon>
    </lineage>
</organism>